<gene>
    <name type="primary">ARF1</name>
    <name type="synonym">ARF16</name>
    <name type="ordered locus">Os01g0236300</name>
    <name type="ordered locus">LOC_Os01g13520</name>
    <name type="ORF">P0708G02.26</name>
</gene>
<evidence type="ECO:0000250" key="1"/>
<evidence type="ECO:0000255" key="2">
    <source>
        <dbReference type="PROSITE-ProRule" id="PRU00326"/>
    </source>
</evidence>
<evidence type="ECO:0000255" key="3">
    <source>
        <dbReference type="PROSITE-ProRule" id="PRU01081"/>
    </source>
</evidence>
<evidence type="ECO:0000256" key="4">
    <source>
        <dbReference type="SAM" id="MobiDB-lite"/>
    </source>
</evidence>
<evidence type="ECO:0000269" key="5">
    <source>
    </source>
</evidence>
<evidence type="ECO:0000305" key="6"/>
<reference key="1">
    <citation type="journal article" date="2002" name="Nature">
        <title>The genome sequence and structure of rice chromosome 1.</title>
        <authorList>
            <person name="Sasaki T."/>
            <person name="Matsumoto T."/>
            <person name="Yamamoto K."/>
            <person name="Sakata K."/>
            <person name="Baba T."/>
            <person name="Katayose Y."/>
            <person name="Wu J."/>
            <person name="Niimura Y."/>
            <person name="Cheng Z."/>
            <person name="Nagamura Y."/>
            <person name="Antonio B.A."/>
            <person name="Kanamori H."/>
            <person name="Hosokawa S."/>
            <person name="Masukawa M."/>
            <person name="Arikawa K."/>
            <person name="Chiden Y."/>
            <person name="Hayashi M."/>
            <person name="Okamoto M."/>
            <person name="Ando T."/>
            <person name="Aoki H."/>
            <person name="Arita K."/>
            <person name="Hamada M."/>
            <person name="Harada C."/>
            <person name="Hijishita S."/>
            <person name="Honda M."/>
            <person name="Ichikawa Y."/>
            <person name="Idonuma A."/>
            <person name="Iijima M."/>
            <person name="Ikeda M."/>
            <person name="Ikeno M."/>
            <person name="Ito S."/>
            <person name="Ito T."/>
            <person name="Ito Y."/>
            <person name="Ito Y."/>
            <person name="Iwabuchi A."/>
            <person name="Kamiya K."/>
            <person name="Karasawa W."/>
            <person name="Katagiri S."/>
            <person name="Kikuta A."/>
            <person name="Kobayashi N."/>
            <person name="Kono I."/>
            <person name="Machita K."/>
            <person name="Maehara T."/>
            <person name="Mizuno H."/>
            <person name="Mizubayashi T."/>
            <person name="Mukai Y."/>
            <person name="Nagasaki H."/>
            <person name="Nakashima M."/>
            <person name="Nakama Y."/>
            <person name="Nakamichi Y."/>
            <person name="Nakamura M."/>
            <person name="Namiki N."/>
            <person name="Negishi M."/>
            <person name="Ohta I."/>
            <person name="Ono N."/>
            <person name="Saji S."/>
            <person name="Sakai K."/>
            <person name="Shibata M."/>
            <person name="Shimokawa T."/>
            <person name="Shomura A."/>
            <person name="Song J."/>
            <person name="Takazaki Y."/>
            <person name="Terasawa K."/>
            <person name="Tsuji K."/>
            <person name="Waki K."/>
            <person name="Yamagata H."/>
            <person name="Yamane H."/>
            <person name="Yoshiki S."/>
            <person name="Yoshihara R."/>
            <person name="Yukawa K."/>
            <person name="Zhong H."/>
            <person name="Iwama H."/>
            <person name="Endo T."/>
            <person name="Ito H."/>
            <person name="Hahn J.H."/>
            <person name="Kim H.-I."/>
            <person name="Eun M.-Y."/>
            <person name="Yano M."/>
            <person name="Jiang J."/>
            <person name="Gojobori T."/>
        </authorList>
    </citation>
    <scope>NUCLEOTIDE SEQUENCE [LARGE SCALE GENOMIC DNA]</scope>
    <source>
        <strain>cv. Nipponbare</strain>
    </source>
</reference>
<reference key="2">
    <citation type="journal article" date="2005" name="Nature">
        <title>The map-based sequence of the rice genome.</title>
        <authorList>
            <consortium name="International rice genome sequencing project (IRGSP)"/>
        </authorList>
    </citation>
    <scope>NUCLEOTIDE SEQUENCE [LARGE SCALE GENOMIC DNA]</scope>
    <source>
        <strain>cv. Nipponbare</strain>
    </source>
</reference>
<reference key="3">
    <citation type="journal article" date="2008" name="Nucleic Acids Res.">
        <title>The rice annotation project database (RAP-DB): 2008 update.</title>
        <authorList>
            <consortium name="The rice annotation project (RAP)"/>
        </authorList>
    </citation>
    <scope>GENOME REANNOTATION</scope>
    <source>
        <strain>cv. Nipponbare</strain>
    </source>
</reference>
<reference key="4">
    <citation type="journal article" date="2013" name="Rice">
        <title>Improvement of the Oryza sativa Nipponbare reference genome using next generation sequence and optical map data.</title>
        <authorList>
            <person name="Kawahara Y."/>
            <person name="de la Bastide M."/>
            <person name="Hamilton J.P."/>
            <person name="Kanamori H."/>
            <person name="McCombie W.R."/>
            <person name="Ouyang S."/>
            <person name="Schwartz D.C."/>
            <person name="Tanaka T."/>
            <person name="Wu J."/>
            <person name="Zhou S."/>
            <person name="Childs K.L."/>
            <person name="Davidson R.M."/>
            <person name="Lin H."/>
            <person name="Quesada-Ocampo L."/>
            <person name="Vaillancourt B."/>
            <person name="Sakai H."/>
            <person name="Lee S.S."/>
            <person name="Kim J."/>
            <person name="Numa H."/>
            <person name="Itoh T."/>
            <person name="Buell C.R."/>
            <person name="Matsumoto T."/>
        </authorList>
    </citation>
    <scope>GENOME REANNOTATION</scope>
    <source>
        <strain>cv. Nipponbare</strain>
    </source>
</reference>
<reference key="5">
    <citation type="journal article" date="2003" name="Science">
        <title>Collection, mapping, and annotation of over 28,000 cDNA clones from japonica rice.</title>
        <authorList>
            <consortium name="The rice full-length cDNA consortium"/>
        </authorList>
    </citation>
    <scope>NUCLEOTIDE SEQUENCE [LARGE SCALE MRNA]</scope>
    <source>
        <strain>cv. Nipponbare</strain>
    </source>
</reference>
<reference key="6">
    <citation type="journal article" date="2001" name="Genes Genet. Syst.">
        <title>Auxin response factor family in rice.</title>
        <authorList>
            <person name="Sato Y."/>
            <person name="Nishimura A."/>
            <person name="Ito M."/>
            <person name="Ashikari M."/>
            <person name="Hirano H.-Y."/>
            <person name="Matsuoka M."/>
        </authorList>
    </citation>
    <scope>NUCLEOTIDE SEQUENCE [MRNA] OF 5-699</scope>
    <source>
        <strain>cv. Nipponbare</strain>
    </source>
</reference>
<reference key="7">
    <citation type="journal article" date="2007" name="Gene">
        <title>Genome-wide analysis of the auxin response factors (ARF) gene family in rice (Oryza sativa).</title>
        <authorList>
            <person name="Wang D."/>
            <person name="Pei K."/>
            <person name="Fu Y."/>
            <person name="Sun Z."/>
            <person name="Li S."/>
            <person name="Liu H."/>
            <person name="Tang K."/>
            <person name="Han B."/>
            <person name="Tao Y."/>
        </authorList>
    </citation>
    <scope>GENE FAMILY</scope>
    <scope>TISSUE SPECIFICITY</scope>
    <scope>INDUCTION</scope>
    <scope>NOMENCLATURE</scope>
</reference>
<proteinExistence type="evidence at transcript level"/>
<organism>
    <name type="scientific">Oryza sativa subsp. japonica</name>
    <name type="common">Rice</name>
    <dbReference type="NCBI Taxonomy" id="39947"/>
    <lineage>
        <taxon>Eukaryota</taxon>
        <taxon>Viridiplantae</taxon>
        <taxon>Streptophyta</taxon>
        <taxon>Embryophyta</taxon>
        <taxon>Tracheophyta</taxon>
        <taxon>Spermatophyta</taxon>
        <taxon>Magnoliopsida</taxon>
        <taxon>Liliopsida</taxon>
        <taxon>Poales</taxon>
        <taxon>Poaceae</taxon>
        <taxon>BOP clade</taxon>
        <taxon>Oryzoideae</taxon>
        <taxon>Oryzeae</taxon>
        <taxon>Oryzinae</taxon>
        <taxon>Oryza</taxon>
        <taxon>Oryza sativa</taxon>
    </lineage>
</organism>
<comment type="function">
    <text>Auxin response factors (ARFs) are transcriptional factors that bind specifically to the DNA sequence 5'-TGTCTC-3' found in the auxin-responsive promoter elements (AuxREs).</text>
</comment>
<comment type="subunit">
    <text evidence="1">Homodimers and heterodimers.</text>
</comment>
<comment type="subcellular location">
    <subcellularLocation>
        <location evidence="2">Nucleus</location>
    </subcellularLocation>
</comment>
<comment type="tissue specificity">
    <text evidence="5">Expressed in roots, culms, leaves and young panicles.</text>
</comment>
<comment type="induction">
    <text evidence="5">By auxin under light or dark conditions.</text>
</comment>
<comment type="domain">
    <text>Interactions between auxin response factors (ARFs) and Aux/IAA proteins occur through their C-terminal dimerization domains III and IV.</text>
</comment>
<comment type="similarity">
    <text evidence="6">Belongs to the ARF family.</text>
</comment>
<dbReference type="EMBL" id="AP001539">
    <property type="protein sequence ID" value="BAD81271.1"/>
    <property type="molecule type" value="Genomic_DNA"/>
</dbReference>
<dbReference type="EMBL" id="AP008207">
    <property type="protein sequence ID" value="BAF04442.1"/>
    <property type="molecule type" value="Genomic_DNA"/>
</dbReference>
<dbReference type="EMBL" id="AP014957">
    <property type="protein sequence ID" value="BAS71229.1"/>
    <property type="molecule type" value="Genomic_DNA"/>
</dbReference>
<dbReference type="EMBL" id="AK102521">
    <property type="protein sequence ID" value="BAG95597.1"/>
    <property type="molecule type" value="mRNA"/>
</dbReference>
<dbReference type="EMBL" id="AB071300">
    <property type="protein sequence ID" value="BAB85920.1"/>
    <property type="molecule type" value="mRNA"/>
</dbReference>
<dbReference type="RefSeq" id="XP_015622434.1">
    <property type="nucleotide sequence ID" value="XM_015766948.1"/>
</dbReference>
<dbReference type="SMR" id="Q5NB85"/>
<dbReference type="FunCoup" id="Q5NB85">
    <property type="interactions" value="13"/>
</dbReference>
<dbReference type="STRING" id="39947.Q5NB85"/>
<dbReference type="PaxDb" id="39947-Q5NB85"/>
<dbReference type="EnsemblPlants" id="Os01t0236300-01">
    <property type="protein sequence ID" value="Os01t0236300-01"/>
    <property type="gene ID" value="Os01g0236300"/>
</dbReference>
<dbReference type="EnsemblPlants" id="Os01t0236300-02">
    <property type="protein sequence ID" value="Os01t0236300-02"/>
    <property type="gene ID" value="Os01g0236300"/>
</dbReference>
<dbReference type="Gramene" id="Os01t0236300-01">
    <property type="protein sequence ID" value="Os01t0236300-01"/>
    <property type="gene ID" value="Os01g0236300"/>
</dbReference>
<dbReference type="Gramene" id="Os01t0236300-02">
    <property type="protein sequence ID" value="Os01t0236300-02"/>
    <property type="gene ID" value="Os01g0236300"/>
</dbReference>
<dbReference type="KEGG" id="dosa:Os01g0236300"/>
<dbReference type="eggNOG" id="ENOG502QTME">
    <property type="taxonomic scope" value="Eukaryota"/>
</dbReference>
<dbReference type="HOGENOM" id="CLU_002626_2_2_1"/>
<dbReference type="InParanoid" id="Q5NB85"/>
<dbReference type="OMA" id="KWKVAFT"/>
<dbReference type="OrthoDB" id="1050118at2759"/>
<dbReference type="PlantReactome" id="R-OSA-9675508">
    <property type="pathway name" value="Root elongation"/>
</dbReference>
<dbReference type="Proteomes" id="UP000000763">
    <property type="component" value="Chromosome 1"/>
</dbReference>
<dbReference type="Proteomes" id="UP000059680">
    <property type="component" value="Chromosome 1"/>
</dbReference>
<dbReference type="ExpressionAtlas" id="Q5NB85">
    <property type="expression patterns" value="baseline and differential"/>
</dbReference>
<dbReference type="GO" id="GO:0005634">
    <property type="term" value="C:nucleus"/>
    <property type="evidence" value="ECO:0007669"/>
    <property type="project" value="UniProtKB-SubCell"/>
</dbReference>
<dbReference type="GO" id="GO:0003677">
    <property type="term" value="F:DNA binding"/>
    <property type="evidence" value="ECO:0007669"/>
    <property type="project" value="UniProtKB-KW"/>
</dbReference>
<dbReference type="GO" id="GO:0009734">
    <property type="term" value="P:auxin-activated signaling pathway"/>
    <property type="evidence" value="ECO:0007669"/>
    <property type="project" value="UniProtKB-KW"/>
</dbReference>
<dbReference type="GO" id="GO:0006355">
    <property type="term" value="P:regulation of DNA-templated transcription"/>
    <property type="evidence" value="ECO:0007669"/>
    <property type="project" value="InterPro"/>
</dbReference>
<dbReference type="CDD" id="cd10017">
    <property type="entry name" value="B3_DNA"/>
    <property type="match status" value="1"/>
</dbReference>
<dbReference type="FunFam" id="2.30.30.1040:FF:000001">
    <property type="entry name" value="Auxin response factor"/>
    <property type="match status" value="1"/>
</dbReference>
<dbReference type="FunFam" id="2.40.330.10:FF:000001">
    <property type="entry name" value="Auxin response factor"/>
    <property type="match status" value="1"/>
</dbReference>
<dbReference type="Gene3D" id="2.30.30.1040">
    <property type="match status" value="1"/>
</dbReference>
<dbReference type="Gene3D" id="2.40.330.10">
    <property type="entry name" value="DNA-binding pseudobarrel domain"/>
    <property type="match status" value="1"/>
</dbReference>
<dbReference type="Gene3D" id="3.10.20.90">
    <property type="entry name" value="Phosphatidylinositol 3-kinase Catalytic Subunit, Chain A, domain 1"/>
    <property type="match status" value="1"/>
</dbReference>
<dbReference type="InterPro" id="IPR010525">
    <property type="entry name" value="ARF_dom"/>
</dbReference>
<dbReference type="InterPro" id="IPR044835">
    <property type="entry name" value="ARF_plant"/>
</dbReference>
<dbReference type="InterPro" id="IPR033389">
    <property type="entry name" value="AUX/IAA_dom"/>
</dbReference>
<dbReference type="InterPro" id="IPR003340">
    <property type="entry name" value="B3_DNA-bd"/>
</dbReference>
<dbReference type="InterPro" id="IPR015300">
    <property type="entry name" value="DNA-bd_pseudobarrel_sf"/>
</dbReference>
<dbReference type="InterPro" id="IPR053793">
    <property type="entry name" value="PB1-like"/>
</dbReference>
<dbReference type="PANTHER" id="PTHR31384">
    <property type="entry name" value="AUXIN RESPONSE FACTOR 4-RELATED"/>
    <property type="match status" value="1"/>
</dbReference>
<dbReference type="PANTHER" id="PTHR31384:SF1">
    <property type="entry name" value="AUXIN RESPONSE FACTOR 9"/>
    <property type="match status" value="1"/>
</dbReference>
<dbReference type="Pfam" id="PF06507">
    <property type="entry name" value="ARF_AD"/>
    <property type="match status" value="1"/>
</dbReference>
<dbReference type="Pfam" id="PF02309">
    <property type="entry name" value="AUX_IAA"/>
    <property type="match status" value="1"/>
</dbReference>
<dbReference type="Pfam" id="PF02362">
    <property type="entry name" value="B3"/>
    <property type="match status" value="1"/>
</dbReference>
<dbReference type="SMART" id="SM01019">
    <property type="entry name" value="B3"/>
    <property type="match status" value="1"/>
</dbReference>
<dbReference type="SUPFAM" id="SSF54277">
    <property type="entry name" value="CAD &amp; PB1 domains"/>
    <property type="match status" value="1"/>
</dbReference>
<dbReference type="SUPFAM" id="SSF101936">
    <property type="entry name" value="DNA-binding pseudobarrel domain"/>
    <property type="match status" value="1"/>
</dbReference>
<dbReference type="PROSITE" id="PS50863">
    <property type="entry name" value="B3"/>
    <property type="match status" value="1"/>
</dbReference>
<dbReference type="PROSITE" id="PS51745">
    <property type="entry name" value="PB1"/>
    <property type="match status" value="1"/>
</dbReference>
<keyword id="KW-0927">Auxin signaling pathway</keyword>
<keyword id="KW-0238">DNA-binding</keyword>
<keyword id="KW-0539">Nucleus</keyword>
<keyword id="KW-1185">Reference proteome</keyword>
<keyword id="KW-0804">Transcription</keyword>
<keyword id="KW-0805">Transcription regulation</keyword>
<accession>Q5NB85</accession>
<accession>B7ETA0</accession>
<accession>Q8S975</accession>
<protein>
    <recommendedName>
        <fullName>Auxin response factor 1</fullName>
    </recommendedName>
    <alternativeName>
        <fullName>OsARF16</fullName>
    </alternativeName>
</protein>
<feature type="chain" id="PRO_0000299254" description="Auxin response factor 1">
    <location>
        <begin position="1"/>
        <end position="699"/>
    </location>
</feature>
<feature type="domain" description="PB1" evidence="3">
    <location>
        <begin position="595"/>
        <end position="684"/>
    </location>
</feature>
<feature type="DNA-binding region" description="TF-B3" evidence="2">
    <location>
        <begin position="122"/>
        <end position="224"/>
    </location>
</feature>
<feature type="region of interest" description="Disordered" evidence="4">
    <location>
        <begin position="539"/>
        <end position="565"/>
    </location>
</feature>
<feature type="region of interest" description="Disordered" evidence="4">
    <location>
        <begin position="680"/>
        <end position="699"/>
    </location>
</feature>
<feature type="compositionally biased region" description="Polar residues" evidence="4">
    <location>
        <begin position="687"/>
        <end position="699"/>
    </location>
</feature>
<name>ARFA_ORYSJ</name>
<sequence length="699" mass="77502">MSSQGAGGGVGDPELFAELWRACAGPLVEVPQRDERVFYFLQGHLEQLQEPTDPALLAEQIKMFQVPYKILCKVVNVELKAETETDEVFAQITLQPDPDQENLPTLPDPPLPEQPRPVVHSFCKILTPSDTSTHGGFSVLRRHANECLPPLDMSMATPTQELITKDLHGSEWRFKHIYRGQPRRHLLTTGWSTFVTSKKLISGDAFVYLRSETGEQRVGVRRLVQKQSTMPASVISSQSMHLGVLASASHAIKTNSIFLVYYRPRLSQSQYIVSVNKYLAASKVGFNVGMRFKMSFEGEDVPVKKFSGTIVGEGDLSLQWSGSEWKSLKVQWDEVTNVNGPERVSPWEIETCDGTAPAINVPLQSATKNKRPREPSETIDLQSLEPAQEFWLSGMPQQHEKTGIGSSEPNCISGHQVVWPGEHPGYGAVSSSVCQNPLVLESWLKDFNSSNKGVSPTLSEISQKIFQVTSNEARIATWPARSAYQAEEPTSKLSSNTAACGYRTEEVAPNASKVVEGKKEPAMFRLFGVDLMKCTSISTTTDDKSSVGAGEASAKGTGSHEDSGQLSAFSKVTKEHIAADESPQEIQSHQNYTARTRIKVQMHGNAVGRAVDLANLDGYEQLMNELEEMFNIKDLKQKWKVAFTDDEGDTMEVGDDPWLEFCQMVRKIVLYPIEDEKKIEPHPKLLSSANPEQDQKTGF</sequence>